<proteinExistence type="evidence at transcript level"/>
<dbReference type="EC" id="2.3.-.-" evidence="5"/>
<dbReference type="EMBL" id="HF679030">
    <property type="protein sequence ID" value="CCT72379.1"/>
    <property type="molecule type" value="Genomic_DNA"/>
</dbReference>
<dbReference type="RefSeq" id="XP_023434457.1">
    <property type="nucleotide sequence ID" value="XM_023581823.1"/>
</dbReference>
<dbReference type="SMR" id="S0EBV2"/>
<dbReference type="STRING" id="1279085.S0EBV2"/>
<dbReference type="ESTHER" id="gibf5-fuj3">
    <property type="family name" value="Thiohydrolase"/>
</dbReference>
<dbReference type="EnsemblFungi" id="CCT72379">
    <property type="protein sequence ID" value="CCT72379"/>
    <property type="gene ID" value="FFUJ_12241"/>
</dbReference>
<dbReference type="GeneID" id="35405697"/>
<dbReference type="VEuPathDB" id="FungiDB:FFUJ_12241"/>
<dbReference type="HOGENOM" id="CLU_048587_1_1_1"/>
<dbReference type="Proteomes" id="UP000016800">
    <property type="component" value="Chromosome 8"/>
</dbReference>
<dbReference type="GO" id="GO:0016740">
    <property type="term" value="F:transferase activity"/>
    <property type="evidence" value="ECO:0007669"/>
    <property type="project" value="UniProtKB-KW"/>
</dbReference>
<dbReference type="Gene3D" id="1.10.10.800">
    <property type="match status" value="1"/>
</dbReference>
<dbReference type="Gene3D" id="3.40.50.1820">
    <property type="entry name" value="alpha/beta hydrolase"/>
    <property type="match status" value="1"/>
</dbReference>
<dbReference type="InterPro" id="IPR000073">
    <property type="entry name" value="AB_hydrolase_1"/>
</dbReference>
<dbReference type="InterPro" id="IPR029058">
    <property type="entry name" value="AB_hydrolase_fold"/>
</dbReference>
<dbReference type="InterPro" id="IPR051411">
    <property type="entry name" value="Polyketide_trans_af380"/>
</dbReference>
<dbReference type="PANTHER" id="PTHR47751:SF2">
    <property type="entry name" value="DLTD N-TERMINAL DOMAIN PROTEIN (AFU_ORTHOLOGUE AFUA_8G00380)-RELATED"/>
    <property type="match status" value="1"/>
</dbReference>
<dbReference type="PANTHER" id="PTHR47751">
    <property type="entry name" value="SUPERFAMILY HYDROLASE, PUTATIVE (AFU_ORTHOLOGUE AFUA_2G16580)-RELATED"/>
    <property type="match status" value="1"/>
</dbReference>
<dbReference type="Pfam" id="PF12697">
    <property type="entry name" value="Abhydrolase_6"/>
    <property type="match status" value="1"/>
</dbReference>
<dbReference type="SUPFAM" id="SSF53474">
    <property type="entry name" value="alpha/beta-Hydrolases"/>
    <property type="match status" value="1"/>
</dbReference>
<reference key="1">
    <citation type="journal article" date="2013" name="PLoS Pathog.">
        <title>Deciphering the cryptic genome: genome-wide analyses of the rice pathogen Fusarium fujikuroi reveal complex regulation of secondary metabolism and novel metabolites.</title>
        <authorList>
            <person name="Wiemann P."/>
            <person name="Sieber C.M.K."/>
            <person name="von Bargen K.W."/>
            <person name="Studt L."/>
            <person name="Niehaus E.-M."/>
            <person name="Espino J.J."/>
            <person name="Huss K."/>
            <person name="Michielse C.B."/>
            <person name="Albermann S."/>
            <person name="Wagner D."/>
            <person name="Bergner S.V."/>
            <person name="Connolly L.R."/>
            <person name="Fischer A."/>
            <person name="Reuter G."/>
            <person name="Kleigrewe K."/>
            <person name="Bald T."/>
            <person name="Wingfield B.D."/>
            <person name="Ophir R."/>
            <person name="Freeman S."/>
            <person name="Hippler M."/>
            <person name="Smith K.M."/>
            <person name="Brown D.W."/>
            <person name="Proctor R.H."/>
            <person name="Muensterkoetter M."/>
            <person name="Freitag M."/>
            <person name="Humpf H.-U."/>
            <person name="Gueldener U."/>
            <person name="Tudzynski B."/>
        </authorList>
    </citation>
    <scope>NUCLEOTIDE SEQUENCE [LARGE SCALE GENOMIC DNA]</scope>
    <scope>IDENTIFICATION</scope>
    <scope>FUNCTION</scope>
    <scope>INDUCTION</scope>
    <source>
        <strain>CBS 195.34 / IMI 58289 / NRRL A-6831</strain>
    </source>
</reference>
<reference key="2">
    <citation type="journal article" date="2015" name="J. Nat. Prod.">
        <title>Isolation and structure elucidation of fujikurins A-D: products of the PKS19 gene cluster in Fusarium fujikuroi.</title>
        <authorList>
            <person name="von Bargen K.W."/>
            <person name="Niehaus E.M."/>
            <person name="Krug I."/>
            <person name="Bergander K."/>
            <person name="Wuerthwein E.U."/>
            <person name="Tudzynski B."/>
            <person name="Humpf H.U."/>
        </authorList>
    </citation>
    <scope>FUNCTION</scope>
</reference>
<evidence type="ECO:0000255" key="1"/>
<evidence type="ECO:0000269" key="2">
    <source>
    </source>
</evidence>
<evidence type="ECO:0000269" key="3">
    <source>
    </source>
</evidence>
<evidence type="ECO:0000303" key="4">
    <source>
    </source>
</evidence>
<evidence type="ECO:0000305" key="5"/>
<organism>
    <name type="scientific">Gibberella fujikuroi (strain CBS 195.34 / IMI 58289 / NRRL A-6831)</name>
    <name type="common">Bakanae and foot rot disease fungus</name>
    <name type="synonym">Fusarium fujikuroi</name>
    <dbReference type="NCBI Taxonomy" id="1279085"/>
    <lineage>
        <taxon>Eukaryota</taxon>
        <taxon>Fungi</taxon>
        <taxon>Dikarya</taxon>
        <taxon>Ascomycota</taxon>
        <taxon>Pezizomycotina</taxon>
        <taxon>Sordariomycetes</taxon>
        <taxon>Hypocreomycetidae</taxon>
        <taxon>Hypocreales</taxon>
        <taxon>Nectriaceae</taxon>
        <taxon>Fusarium</taxon>
        <taxon>Fusarium fujikuroi species complex</taxon>
    </lineage>
</organism>
<gene>
    <name type="ORF">FFUJ_12241</name>
</gene>
<protein>
    <recommendedName>
        <fullName evidence="5">Polyketide transferase FFUJ_12241</fullName>
        <ecNumber evidence="5">2.3.-.-</ecNumber>
    </recommendedName>
    <alternativeName>
        <fullName evidence="4">Fujikurins biosynthesis cluster protein FFUJ_12241</fullName>
    </alternativeName>
</protein>
<name>FUJ3_GIBF5</name>
<comment type="function">
    <text evidence="2 3">Polyketide transferase; part of the gene cluster that mediates the biosynthesis of fujikurins A-D, secondary metabolites playing a role during rice infection (PubMed:23825955, PubMed:26192387). The polyketide synthase PKS19 acts with the trans-enoyl reductase FFUJ_12240 and the polyketide transferase FFUJ_12241 to produce fujikurins, however, the biosynthesis pathway has not been identified yet (PubMed:23825955, PubMed:26192387).</text>
</comment>
<comment type="induction">
    <text evidence="2">The fujikurins gene cluster is specifically expressed during rice infection (PubMed:23825955).</text>
</comment>
<comment type="similarity">
    <text evidence="5">Belongs to the polyketide transferase af380 family.</text>
</comment>
<sequence length="320" mass="35736">MSPVLPRHDIEFPTLDGITLRGWLYPATKRGPGMILSPGFNMPKDAIIPDICKWFQERDITCLAWDPRGIGASDGEPRNDIDPRQEAEHLHDAVTWLSKNPLVDVTKIALWGLCFGGNVTLAAAALEYVLNGSPFSSPPCFVVPSWADIDLTLSKRIAAMISVAPLIDSTGLPERRQPILELAMYDRAGRLEGDDPMYLPYVNEDGSVPNGLQLAADMMPALDRLGIPVENRVTVQTYYRALTWSVLNLVEYIAPTPAMMVTPEFDVSCPTKDQLKAYERMGEPKELDILKGKGHLDWIFGDVDIILNRQLDFLKRQMNF</sequence>
<keyword id="KW-1185">Reference proteome</keyword>
<keyword id="KW-0808">Transferase</keyword>
<accession>S0EBV2</accession>
<feature type="chain" id="PRO_0000442007" description="Polyketide transferase FFUJ_12241">
    <location>
        <begin position="1"/>
        <end position="320"/>
    </location>
</feature>
<feature type="region of interest" description="Abhydrolase domain" evidence="1">
    <location>
        <begin position="58"/>
        <end position="298"/>
    </location>
</feature>